<evidence type="ECO:0000255" key="1">
    <source>
        <dbReference type="HAMAP-Rule" id="MF_00126"/>
    </source>
</evidence>
<keyword id="KW-0030">Aminoacyl-tRNA synthetase</keyword>
<keyword id="KW-0067">ATP-binding</keyword>
<keyword id="KW-0963">Cytoplasm</keyword>
<keyword id="KW-0436">Ligase</keyword>
<keyword id="KW-0547">Nucleotide-binding</keyword>
<keyword id="KW-0648">Protein biosynthesis</keyword>
<dbReference type="EC" id="6.1.1.18" evidence="1"/>
<dbReference type="EMBL" id="CP000083">
    <property type="protein sequence ID" value="AAZ27222.1"/>
    <property type="molecule type" value="Genomic_DNA"/>
</dbReference>
<dbReference type="RefSeq" id="WP_011044017.1">
    <property type="nucleotide sequence ID" value="NC_003910.7"/>
</dbReference>
<dbReference type="SMR" id="Q47Z40"/>
<dbReference type="STRING" id="167879.CPS_3240"/>
<dbReference type="KEGG" id="cps:CPS_3240"/>
<dbReference type="eggNOG" id="COG0008">
    <property type="taxonomic scope" value="Bacteria"/>
</dbReference>
<dbReference type="HOGENOM" id="CLU_001882_2_3_6"/>
<dbReference type="Proteomes" id="UP000000547">
    <property type="component" value="Chromosome"/>
</dbReference>
<dbReference type="GO" id="GO:0005829">
    <property type="term" value="C:cytosol"/>
    <property type="evidence" value="ECO:0007669"/>
    <property type="project" value="TreeGrafter"/>
</dbReference>
<dbReference type="GO" id="GO:0005524">
    <property type="term" value="F:ATP binding"/>
    <property type="evidence" value="ECO:0007669"/>
    <property type="project" value="UniProtKB-UniRule"/>
</dbReference>
<dbReference type="GO" id="GO:0004819">
    <property type="term" value="F:glutamine-tRNA ligase activity"/>
    <property type="evidence" value="ECO:0007669"/>
    <property type="project" value="UniProtKB-UniRule"/>
</dbReference>
<dbReference type="GO" id="GO:0006425">
    <property type="term" value="P:glutaminyl-tRNA aminoacylation"/>
    <property type="evidence" value="ECO:0007669"/>
    <property type="project" value="InterPro"/>
</dbReference>
<dbReference type="GO" id="GO:0006424">
    <property type="term" value="P:glutamyl-tRNA aminoacylation"/>
    <property type="evidence" value="ECO:0007669"/>
    <property type="project" value="UniProtKB-UniRule"/>
</dbReference>
<dbReference type="CDD" id="cd00807">
    <property type="entry name" value="GlnRS_core"/>
    <property type="match status" value="1"/>
</dbReference>
<dbReference type="FunFam" id="1.10.1160.10:FF:000001">
    <property type="entry name" value="Glutamine--tRNA ligase"/>
    <property type="match status" value="1"/>
</dbReference>
<dbReference type="FunFam" id="2.40.240.10:FF:000001">
    <property type="entry name" value="Glutamine--tRNA ligase"/>
    <property type="match status" value="1"/>
</dbReference>
<dbReference type="FunFam" id="3.90.800.10:FF:000001">
    <property type="entry name" value="Glutamine--tRNA ligase"/>
    <property type="match status" value="1"/>
</dbReference>
<dbReference type="FunFam" id="3.40.50.620:FF:000037">
    <property type="entry name" value="Glutamine--tRNA ligase cytoplasmic"/>
    <property type="match status" value="1"/>
</dbReference>
<dbReference type="Gene3D" id="1.10.1160.10">
    <property type="entry name" value="Glutamyl-trna Synthetase, Domain 2"/>
    <property type="match status" value="1"/>
</dbReference>
<dbReference type="Gene3D" id="3.90.800.10">
    <property type="entry name" value="Glutamyl-tRNA Synthetase, Domain 3"/>
    <property type="match status" value="1"/>
</dbReference>
<dbReference type="Gene3D" id="3.40.50.620">
    <property type="entry name" value="HUPs"/>
    <property type="match status" value="1"/>
</dbReference>
<dbReference type="Gene3D" id="2.40.240.10">
    <property type="entry name" value="Ribosomal Protein L25, Chain P"/>
    <property type="match status" value="2"/>
</dbReference>
<dbReference type="HAMAP" id="MF_00126">
    <property type="entry name" value="Gln_tRNA_synth"/>
    <property type="match status" value="1"/>
</dbReference>
<dbReference type="InterPro" id="IPR001412">
    <property type="entry name" value="aa-tRNA-synth_I_CS"/>
</dbReference>
<dbReference type="InterPro" id="IPR004514">
    <property type="entry name" value="Gln-tRNA-synth"/>
</dbReference>
<dbReference type="InterPro" id="IPR050132">
    <property type="entry name" value="Gln/Glu-tRNA_Ligase"/>
</dbReference>
<dbReference type="InterPro" id="IPR022861">
    <property type="entry name" value="Gln_tRNA_ligase_bac"/>
</dbReference>
<dbReference type="InterPro" id="IPR000924">
    <property type="entry name" value="Glu/Gln-tRNA-synth"/>
</dbReference>
<dbReference type="InterPro" id="IPR020058">
    <property type="entry name" value="Glu/Gln-tRNA-synth_Ib_cat-dom"/>
</dbReference>
<dbReference type="InterPro" id="IPR020059">
    <property type="entry name" value="Glu/Gln-tRNA-synth_Ib_codon-bd"/>
</dbReference>
<dbReference type="InterPro" id="IPR020061">
    <property type="entry name" value="Glu_tRNA_lig_a-bdl"/>
</dbReference>
<dbReference type="InterPro" id="IPR020056">
    <property type="entry name" value="Rbsml_bL25/Gln-tRNA_synth_N"/>
</dbReference>
<dbReference type="InterPro" id="IPR011035">
    <property type="entry name" value="Ribosomal_bL25/Gln-tRNA_synth"/>
</dbReference>
<dbReference type="InterPro" id="IPR014729">
    <property type="entry name" value="Rossmann-like_a/b/a_fold"/>
</dbReference>
<dbReference type="InterPro" id="IPR049437">
    <property type="entry name" value="tRNA-synt_1c_C2"/>
</dbReference>
<dbReference type="NCBIfam" id="TIGR00440">
    <property type="entry name" value="glnS"/>
    <property type="match status" value="1"/>
</dbReference>
<dbReference type="NCBIfam" id="NF011291">
    <property type="entry name" value="PRK14703.1"/>
    <property type="match status" value="1"/>
</dbReference>
<dbReference type="PANTHER" id="PTHR43097:SF5">
    <property type="entry name" value="GLUTAMATE--TRNA LIGASE"/>
    <property type="match status" value="1"/>
</dbReference>
<dbReference type="PANTHER" id="PTHR43097">
    <property type="entry name" value="GLUTAMINE-TRNA LIGASE"/>
    <property type="match status" value="1"/>
</dbReference>
<dbReference type="Pfam" id="PF00749">
    <property type="entry name" value="tRNA-synt_1c"/>
    <property type="match status" value="1"/>
</dbReference>
<dbReference type="Pfam" id="PF03950">
    <property type="entry name" value="tRNA-synt_1c_C"/>
    <property type="match status" value="1"/>
</dbReference>
<dbReference type="Pfam" id="PF20974">
    <property type="entry name" value="tRNA-synt_1c_C2"/>
    <property type="match status" value="1"/>
</dbReference>
<dbReference type="PRINTS" id="PR00987">
    <property type="entry name" value="TRNASYNTHGLU"/>
</dbReference>
<dbReference type="SUPFAM" id="SSF52374">
    <property type="entry name" value="Nucleotidylyl transferase"/>
    <property type="match status" value="1"/>
</dbReference>
<dbReference type="SUPFAM" id="SSF50715">
    <property type="entry name" value="Ribosomal protein L25-like"/>
    <property type="match status" value="1"/>
</dbReference>
<dbReference type="PROSITE" id="PS00178">
    <property type="entry name" value="AA_TRNA_LIGASE_I"/>
    <property type="match status" value="1"/>
</dbReference>
<reference key="1">
    <citation type="journal article" date="2005" name="Proc. Natl. Acad. Sci. U.S.A.">
        <title>The psychrophilic lifestyle as revealed by the genome sequence of Colwellia psychrerythraea 34H through genomic and proteomic analyses.</title>
        <authorList>
            <person name="Methe B.A."/>
            <person name="Nelson K.E."/>
            <person name="Deming J.W."/>
            <person name="Momen B."/>
            <person name="Melamud E."/>
            <person name="Zhang X."/>
            <person name="Moult J."/>
            <person name="Madupu R."/>
            <person name="Nelson W.C."/>
            <person name="Dodson R.J."/>
            <person name="Brinkac L.M."/>
            <person name="Daugherty S.C."/>
            <person name="Durkin A.S."/>
            <person name="DeBoy R.T."/>
            <person name="Kolonay J.F."/>
            <person name="Sullivan S.A."/>
            <person name="Zhou L."/>
            <person name="Davidsen T.M."/>
            <person name="Wu M."/>
            <person name="Huston A.L."/>
            <person name="Lewis M."/>
            <person name="Weaver B."/>
            <person name="Weidman J.F."/>
            <person name="Khouri H."/>
            <person name="Utterback T.R."/>
            <person name="Feldblyum T.V."/>
            <person name="Fraser C.M."/>
        </authorList>
    </citation>
    <scope>NUCLEOTIDE SEQUENCE [LARGE SCALE GENOMIC DNA]</scope>
    <source>
        <strain>34H / ATCC BAA-681</strain>
    </source>
</reference>
<name>SYQ_COLP3</name>
<proteinExistence type="inferred from homology"/>
<protein>
    <recommendedName>
        <fullName evidence="1">Glutamine--tRNA ligase</fullName>
        <ecNumber evidence="1">6.1.1.18</ecNumber>
    </recommendedName>
    <alternativeName>
        <fullName evidence="1">Glutaminyl-tRNA synthetase</fullName>
        <shortName evidence="1">GlnRS</shortName>
    </alternativeName>
</protein>
<sequence length="556" mass="63750">MSDTENRPTNFIRNIIDADLDSGKHTGVQTRFPPEPNGFLHIGHAKAICLNFGIAQDYNGLCNLRFDDTNPEKEDIDYVHAIQKDVKWLGFEWAGEIHYSSNYFDQLHGFAVELIEKGLAYVCFLNAEETREYRGTLNKPGKNSPYRDTSVEENLALFAKMKNGEFEEGICALRAKIDMTSSFMCLRDPIIYRVRFAHHHQTGDKWCIYPMYDFTHCLSDALEGITHSICTLEFQDNRRLYDWVIEQVSVPSTPHQYEFSRLNLEYTLMSKRKLNTLVEEKLVDSWDDPRMPTIAAFRRRGYTPASMREFAKRIGVTKMENTIEMSVLEACIREDLNDNAPRAMAVLDPIKLVIENYPEDKNEDLIVKNHPSDDEQGTRIVPFSKELYIEAEDFREEANKKYKRLVIDKAVRLRGAYVVTATRCDKDEQGNVTTVYCTYNEDTLGKNPTDGTKPKGVIHWVDANKSLDAIVRLYDRLFTVPNPAAADDFNSVINPQSLVTITGAKVEPSLAEAKPEFAYQFERQGYFCLDNDIKEPGALVFNRTVGLRDTWAKISQ</sequence>
<gene>
    <name evidence="1" type="primary">glnS</name>
    <name type="ordered locus">CPS_3240</name>
</gene>
<accession>Q47Z40</accession>
<comment type="catalytic activity">
    <reaction evidence="1">
        <text>tRNA(Gln) + L-glutamine + ATP = L-glutaminyl-tRNA(Gln) + AMP + diphosphate</text>
        <dbReference type="Rhea" id="RHEA:20121"/>
        <dbReference type="Rhea" id="RHEA-COMP:9662"/>
        <dbReference type="Rhea" id="RHEA-COMP:9681"/>
        <dbReference type="ChEBI" id="CHEBI:30616"/>
        <dbReference type="ChEBI" id="CHEBI:33019"/>
        <dbReference type="ChEBI" id="CHEBI:58359"/>
        <dbReference type="ChEBI" id="CHEBI:78442"/>
        <dbReference type="ChEBI" id="CHEBI:78521"/>
        <dbReference type="ChEBI" id="CHEBI:456215"/>
        <dbReference type="EC" id="6.1.1.18"/>
    </reaction>
</comment>
<comment type="subunit">
    <text evidence="1">Monomer.</text>
</comment>
<comment type="subcellular location">
    <subcellularLocation>
        <location evidence="1">Cytoplasm</location>
    </subcellularLocation>
</comment>
<comment type="similarity">
    <text evidence="1">Belongs to the class-I aminoacyl-tRNA synthetase family.</text>
</comment>
<feature type="chain" id="PRO_1000095486" description="Glutamine--tRNA ligase">
    <location>
        <begin position="1"/>
        <end position="556"/>
    </location>
</feature>
<feature type="short sequence motif" description="'HIGH' region" evidence="1">
    <location>
        <begin position="34"/>
        <end position="44"/>
    </location>
</feature>
<feature type="short sequence motif" description="'KMSKS' region" evidence="1">
    <location>
        <begin position="268"/>
        <end position="272"/>
    </location>
</feature>
<feature type="binding site" evidence="1">
    <location>
        <begin position="35"/>
        <end position="37"/>
    </location>
    <ligand>
        <name>ATP</name>
        <dbReference type="ChEBI" id="CHEBI:30616"/>
    </ligand>
</feature>
<feature type="binding site" evidence="1">
    <location>
        <begin position="41"/>
        <end position="47"/>
    </location>
    <ligand>
        <name>ATP</name>
        <dbReference type="ChEBI" id="CHEBI:30616"/>
    </ligand>
</feature>
<feature type="binding site" evidence="1">
    <location>
        <position position="67"/>
    </location>
    <ligand>
        <name>L-glutamine</name>
        <dbReference type="ChEBI" id="CHEBI:58359"/>
    </ligand>
</feature>
<feature type="binding site" evidence="1">
    <location>
        <position position="212"/>
    </location>
    <ligand>
        <name>L-glutamine</name>
        <dbReference type="ChEBI" id="CHEBI:58359"/>
    </ligand>
</feature>
<feature type="binding site" evidence="1">
    <location>
        <position position="231"/>
    </location>
    <ligand>
        <name>ATP</name>
        <dbReference type="ChEBI" id="CHEBI:30616"/>
    </ligand>
</feature>
<feature type="binding site" evidence="1">
    <location>
        <begin position="261"/>
        <end position="262"/>
    </location>
    <ligand>
        <name>ATP</name>
        <dbReference type="ChEBI" id="CHEBI:30616"/>
    </ligand>
</feature>
<feature type="binding site" evidence="1">
    <location>
        <begin position="269"/>
        <end position="271"/>
    </location>
    <ligand>
        <name>ATP</name>
        <dbReference type="ChEBI" id="CHEBI:30616"/>
    </ligand>
</feature>
<organism>
    <name type="scientific">Colwellia psychrerythraea (strain 34H / ATCC BAA-681)</name>
    <name type="common">Vibrio psychroerythus</name>
    <dbReference type="NCBI Taxonomy" id="167879"/>
    <lineage>
        <taxon>Bacteria</taxon>
        <taxon>Pseudomonadati</taxon>
        <taxon>Pseudomonadota</taxon>
        <taxon>Gammaproteobacteria</taxon>
        <taxon>Alteromonadales</taxon>
        <taxon>Colwelliaceae</taxon>
        <taxon>Colwellia</taxon>
    </lineage>
</organism>